<comment type="function">
    <text evidence="1">Catalyzes the reversible interconversion of serine and glycine with tetrahydrofolate (THF) serving as the one-carbon carrier. This reaction serves as the major source of one-carbon groups required for the biosynthesis of purines, thymidylate, methionine, and other important biomolecules. Also exhibits THF-independent aldolase activity toward beta-hydroxyamino acids, producing glycine and aldehydes, via a retro-aldol mechanism.</text>
</comment>
<comment type="catalytic activity">
    <reaction evidence="1">
        <text>(6R)-5,10-methylene-5,6,7,8-tetrahydrofolate + glycine + H2O = (6S)-5,6,7,8-tetrahydrofolate + L-serine</text>
        <dbReference type="Rhea" id="RHEA:15481"/>
        <dbReference type="ChEBI" id="CHEBI:15377"/>
        <dbReference type="ChEBI" id="CHEBI:15636"/>
        <dbReference type="ChEBI" id="CHEBI:33384"/>
        <dbReference type="ChEBI" id="CHEBI:57305"/>
        <dbReference type="ChEBI" id="CHEBI:57453"/>
        <dbReference type="EC" id="2.1.2.1"/>
    </reaction>
</comment>
<comment type="cofactor">
    <cofactor evidence="1">
        <name>pyridoxal 5'-phosphate</name>
        <dbReference type="ChEBI" id="CHEBI:597326"/>
    </cofactor>
</comment>
<comment type="pathway">
    <text evidence="1">One-carbon metabolism; tetrahydrofolate interconversion.</text>
</comment>
<comment type="pathway">
    <text evidence="1">Amino-acid biosynthesis; glycine biosynthesis; glycine from L-serine: step 1/1.</text>
</comment>
<comment type="subunit">
    <text evidence="1">Homodimer.</text>
</comment>
<comment type="subcellular location">
    <subcellularLocation>
        <location evidence="1">Cytoplasm</location>
    </subcellularLocation>
</comment>
<comment type="similarity">
    <text evidence="1">Belongs to the SHMT family.</text>
</comment>
<dbReference type="EC" id="2.1.2.1" evidence="1"/>
<dbReference type="EMBL" id="CP000703">
    <property type="protein sequence ID" value="ABQ49931.1"/>
    <property type="molecule type" value="Genomic_DNA"/>
</dbReference>
<dbReference type="RefSeq" id="WP_000120494.1">
    <property type="nucleotide sequence ID" value="NC_009487.1"/>
</dbReference>
<dbReference type="SMR" id="A5IUQ8"/>
<dbReference type="KEGG" id="saj:SaurJH9_2149"/>
<dbReference type="HOGENOM" id="CLU_022477_2_1_9"/>
<dbReference type="UniPathway" id="UPA00193"/>
<dbReference type="UniPathway" id="UPA00288">
    <property type="reaction ID" value="UER01023"/>
</dbReference>
<dbReference type="GO" id="GO:0005829">
    <property type="term" value="C:cytosol"/>
    <property type="evidence" value="ECO:0007669"/>
    <property type="project" value="TreeGrafter"/>
</dbReference>
<dbReference type="GO" id="GO:0004372">
    <property type="term" value="F:glycine hydroxymethyltransferase activity"/>
    <property type="evidence" value="ECO:0007669"/>
    <property type="project" value="UniProtKB-UniRule"/>
</dbReference>
<dbReference type="GO" id="GO:0030170">
    <property type="term" value="F:pyridoxal phosphate binding"/>
    <property type="evidence" value="ECO:0007669"/>
    <property type="project" value="UniProtKB-UniRule"/>
</dbReference>
<dbReference type="GO" id="GO:0019264">
    <property type="term" value="P:glycine biosynthetic process from serine"/>
    <property type="evidence" value="ECO:0007669"/>
    <property type="project" value="UniProtKB-UniRule"/>
</dbReference>
<dbReference type="GO" id="GO:0035999">
    <property type="term" value="P:tetrahydrofolate interconversion"/>
    <property type="evidence" value="ECO:0007669"/>
    <property type="project" value="UniProtKB-UniRule"/>
</dbReference>
<dbReference type="CDD" id="cd00378">
    <property type="entry name" value="SHMT"/>
    <property type="match status" value="1"/>
</dbReference>
<dbReference type="FunFam" id="3.40.640.10:FF:000001">
    <property type="entry name" value="Serine hydroxymethyltransferase"/>
    <property type="match status" value="1"/>
</dbReference>
<dbReference type="FunFam" id="3.90.1150.10:FF:000003">
    <property type="entry name" value="Serine hydroxymethyltransferase"/>
    <property type="match status" value="1"/>
</dbReference>
<dbReference type="Gene3D" id="3.90.1150.10">
    <property type="entry name" value="Aspartate Aminotransferase, domain 1"/>
    <property type="match status" value="1"/>
</dbReference>
<dbReference type="Gene3D" id="3.40.640.10">
    <property type="entry name" value="Type I PLP-dependent aspartate aminotransferase-like (Major domain)"/>
    <property type="match status" value="1"/>
</dbReference>
<dbReference type="HAMAP" id="MF_00051">
    <property type="entry name" value="SHMT"/>
    <property type="match status" value="1"/>
</dbReference>
<dbReference type="InterPro" id="IPR015424">
    <property type="entry name" value="PyrdxlP-dep_Trfase"/>
</dbReference>
<dbReference type="InterPro" id="IPR015421">
    <property type="entry name" value="PyrdxlP-dep_Trfase_major"/>
</dbReference>
<dbReference type="InterPro" id="IPR015422">
    <property type="entry name" value="PyrdxlP-dep_Trfase_small"/>
</dbReference>
<dbReference type="InterPro" id="IPR001085">
    <property type="entry name" value="Ser_HO-MeTrfase"/>
</dbReference>
<dbReference type="InterPro" id="IPR049943">
    <property type="entry name" value="Ser_HO-MeTrfase-like"/>
</dbReference>
<dbReference type="InterPro" id="IPR019798">
    <property type="entry name" value="Ser_HO-MeTrfase_PLP_BS"/>
</dbReference>
<dbReference type="InterPro" id="IPR039429">
    <property type="entry name" value="SHMT-like_dom"/>
</dbReference>
<dbReference type="NCBIfam" id="NF000586">
    <property type="entry name" value="PRK00011.1"/>
    <property type="match status" value="1"/>
</dbReference>
<dbReference type="PANTHER" id="PTHR11680">
    <property type="entry name" value="SERINE HYDROXYMETHYLTRANSFERASE"/>
    <property type="match status" value="1"/>
</dbReference>
<dbReference type="PANTHER" id="PTHR11680:SF35">
    <property type="entry name" value="SERINE HYDROXYMETHYLTRANSFERASE 1"/>
    <property type="match status" value="1"/>
</dbReference>
<dbReference type="Pfam" id="PF00464">
    <property type="entry name" value="SHMT"/>
    <property type="match status" value="1"/>
</dbReference>
<dbReference type="PIRSF" id="PIRSF000412">
    <property type="entry name" value="SHMT"/>
    <property type="match status" value="1"/>
</dbReference>
<dbReference type="SUPFAM" id="SSF53383">
    <property type="entry name" value="PLP-dependent transferases"/>
    <property type="match status" value="1"/>
</dbReference>
<dbReference type="PROSITE" id="PS00096">
    <property type="entry name" value="SHMT"/>
    <property type="match status" value="1"/>
</dbReference>
<evidence type="ECO:0000255" key="1">
    <source>
        <dbReference type="HAMAP-Rule" id="MF_00051"/>
    </source>
</evidence>
<proteinExistence type="inferred from homology"/>
<reference key="1">
    <citation type="submission" date="2007-05" db="EMBL/GenBank/DDBJ databases">
        <title>Complete sequence of chromosome of Staphylococcus aureus subsp. aureus JH9.</title>
        <authorList>
            <consortium name="US DOE Joint Genome Institute"/>
            <person name="Copeland A."/>
            <person name="Lucas S."/>
            <person name="Lapidus A."/>
            <person name="Barry K."/>
            <person name="Detter J.C."/>
            <person name="Glavina del Rio T."/>
            <person name="Hammon N."/>
            <person name="Israni S."/>
            <person name="Pitluck S."/>
            <person name="Chain P."/>
            <person name="Malfatti S."/>
            <person name="Shin M."/>
            <person name="Vergez L."/>
            <person name="Schmutz J."/>
            <person name="Larimer F."/>
            <person name="Land M."/>
            <person name="Hauser L."/>
            <person name="Kyrpides N."/>
            <person name="Kim E."/>
            <person name="Tomasz A."/>
            <person name="Richardson P."/>
        </authorList>
    </citation>
    <scope>NUCLEOTIDE SEQUENCE [LARGE SCALE GENOMIC DNA]</scope>
    <source>
        <strain>JH9</strain>
    </source>
</reference>
<accession>A5IUQ8</accession>
<organism>
    <name type="scientific">Staphylococcus aureus (strain JH9)</name>
    <dbReference type="NCBI Taxonomy" id="359786"/>
    <lineage>
        <taxon>Bacteria</taxon>
        <taxon>Bacillati</taxon>
        <taxon>Bacillota</taxon>
        <taxon>Bacilli</taxon>
        <taxon>Bacillales</taxon>
        <taxon>Staphylococcaceae</taxon>
        <taxon>Staphylococcus</taxon>
    </lineage>
</organism>
<keyword id="KW-0028">Amino-acid biosynthesis</keyword>
<keyword id="KW-0963">Cytoplasm</keyword>
<keyword id="KW-0554">One-carbon metabolism</keyword>
<keyword id="KW-0663">Pyridoxal phosphate</keyword>
<keyword id="KW-0808">Transferase</keyword>
<sequence>MSYITKQDKVIAEAIEREFQRQNSNIELIASENFVSEAVMEAQGSVLTNKYAEGYPGRRYYGGCEFVDVTESIAIDRAKALFGAEHVNVQPHSGSQANMAVYLVALEMGDTVLGMNLSHGGHLTHGAPVNFSGKFYNFVEYGVDKDTERINYDEVRKLALEHKPKLIVAGASAYSRTIDFKKFKEIADEVNAKLMVDMAHIAGLVAAGLHPNPVEYADFVTTTTHKTLRGPRGGMILCKEEYKKDIDKTIFPGIQGGPLEHVIAAKAVAFGEALENNFKTYQQQVVKNAKVLAEALINEGFRIVSGGTDNHLVAVDVKGSIGLTGKEAEETLDSVGITCNKNTIPFDQEKPFVTSGIRLGTPAATTRGFDEKAFEEVAKIISLALKNSKDEEKLQQAKERVAKLTAEYPLYQ</sequence>
<feature type="chain" id="PRO_1000074913" description="Serine hydroxymethyltransferase">
    <location>
        <begin position="1"/>
        <end position="412"/>
    </location>
</feature>
<feature type="binding site" evidence="1">
    <location>
        <position position="117"/>
    </location>
    <ligand>
        <name>(6S)-5,6,7,8-tetrahydrofolate</name>
        <dbReference type="ChEBI" id="CHEBI:57453"/>
    </ligand>
</feature>
<feature type="binding site" evidence="1">
    <location>
        <begin position="121"/>
        <end position="123"/>
    </location>
    <ligand>
        <name>(6S)-5,6,7,8-tetrahydrofolate</name>
        <dbReference type="ChEBI" id="CHEBI:57453"/>
    </ligand>
</feature>
<feature type="site" description="Plays an important role in substrate specificity" evidence="1">
    <location>
        <position position="225"/>
    </location>
</feature>
<feature type="modified residue" description="N6-(pyridoxal phosphate)lysine" evidence="1">
    <location>
        <position position="226"/>
    </location>
</feature>
<gene>
    <name evidence="1" type="primary">glyA</name>
    <name type="ordered locus">SaurJH9_2149</name>
</gene>
<protein>
    <recommendedName>
        <fullName evidence="1">Serine hydroxymethyltransferase</fullName>
        <shortName evidence="1">SHMT</shortName>
        <shortName evidence="1">Serine methylase</shortName>
        <ecNumber evidence="1">2.1.2.1</ecNumber>
    </recommendedName>
</protein>
<name>GLYA_STAA9</name>